<keyword id="KW-0963">Cytoplasm</keyword>
<keyword id="KW-0378">Hydrolase</keyword>
<keyword id="KW-0645">Protease</keyword>
<keyword id="KW-1185">Reference proteome</keyword>
<keyword id="KW-0720">Serine protease</keyword>
<name>CLPP_SHESH</name>
<organism>
    <name type="scientific">Shewanella sediminis (strain HAW-EB3)</name>
    <dbReference type="NCBI Taxonomy" id="425104"/>
    <lineage>
        <taxon>Bacteria</taxon>
        <taxon>Pseudomonadati</taxon>
        <taxon>Pseudomonadota</taxon>
        <taxon>Gammaproteobacteria</taxon>
        <taxon>Alteromonadales</taxon>
        <taxon>Shewanellaceae</taxon>
        <taxon>Shewanella</taxon>
    </lineage>
</organism>
<comment type="function">
    <text evidence="1">Cleaves peptides in various proteins in a process that requires ATP hydrolysis. Has a chymotrypsin-like activity. Plays a major role in the degradation of misfolded proteins.</text>
</comment>
<comment type="catalytic activity">
    <reaction evidence="1">
        <text>Hydrolysis of proteins to small peptides in the presence of ATP and magnesium. alpha-casein is the usual test substrate. In the absence of ATP, only oligopeptides shorter than five residues are hydrolyzed (such as succinyl-Leu-Tyr-|-NHMec, and Leu-Tyr-Leu-|-Tyr-Trp, in which cleavage of the -Tyr-|-Leu- and -Tyr-|-Trp bonds also occurs).</text>
        <dbReference type="EC" id="3.4.21.92"/>
    </reaction>
</comment>
<comment type="subunit">
    <text evidence="1">Fourteen ClpP subunits assemble into 2 heptameric rings which stack back to back to give a disk-like structure with a central cavity, resembling the structure of eukaryotic proteasomes.</text>
</comment>
<comment type="subcellular location">
    <subcellularLocation>
        <location evidence="1">Cytoplasm</location>
    </subcellularLocation>
</comment>
<comment type="similarity">
    <text evidence="1">Belongs to the peptidase S14 family.</text>
</comment>
<dbReference type="EC" id="3.4.21.92" evidence="1"/>
<dbReference type="EMBL" id="CP000821">
    <property type="protein sequence ID" value="ABV36152.1"/>
    <property type="molecule type" value="Genomic_DNA"/>
</dbReference>
<dbReference type="RefSeq" id="WP_012141888.1">
    <property type="nucleotide sequence ID" value="NC_009831.1"/>
</dbReference>
<dbReference type="SMR" id="A8FTH9"/>
<dbReference type="STRING" id="425104.Ssed_1541"/>
<dbReference type="MEROPS" id="S14.001"/>
<dbReference type="KEGG" id="sse:Ssed_1541"/>
<dbReference type="eggNOG" id="COG0740">
    <property type="taxonomic scope" value="Bacteria"/>
</dbReference>
<dbReference type="HOGENOM" id="CLU_058707_3_2_6"/>
<dbReference type="OrthoDB" id="9802800at2"/>
<dbReference type="Proteomes" id="UP000002015">
    <property type="component" value="Chromosome"/>
</dbReference>
<dbReference type="GO" id="GO:0005737">
    <property type="term" value="C:cytoplasm"/>
    <property type="evidence" value="ECO:0007669"/>
    <property type="project" value="UniProtKB-SubCell"/>
</dbReference>
<dbReference type="GO" id="GO:0009368">
    <property type="term" value="C:endopeptidase Clp complex"/>
    <property type="evidence" value="ECO:0007669"/>
    <property type="project" value="TreeGrafter"/>
</dbReference>
<dbReference type="GO" id="GO:0004176">
    <property type="term" value="F:ATP-dependent peptidase activity"/>
    <property type="evidence" value="ECO:0007669"/>
    <property type="project" value="InterPro"/>
</dbReference>
<dbReference type="GO" id="GO:0051117">
    <property type="term" value="F:ATPase binding"/>
    <property type="evidence" value="ECO:0007669"/>
    <property type="project" value="TreeGrafter"/>
</dbReference>
<dbReference type="GO" id="GO:0004252">
    <property type="term" value="F:serine-type endopeptidase activity"/>
    <property type="evidence" value="ECO:0007669"/>
    <property type="project" value="UniProtKB-UniRule"/>
</dbReference>
<dbReference type="GO" id="GO:0006515">
    <property type="term" value="P:protein quality control for misfolded or incompletely synthesized proteins"/>
    <property type="evidence" value="ECO:0007669"/>
    <property type="project" value="TreeGrafter"/>
</dbReference>
<dbReference type="CDD" id="cd07017">
    <property type="entry name" value="S14_ClpP_2"/>
    <property type="match status" value="1"/>
</dbReference>
<dbReference type="FunFam" id="3.90.226.10:FF:000001">
    <property type="entry name" value="ATP-dependent Clp protease proteolytic subunit"/>
    <property type="match status" value="1"/>
</dbReference>
<dbReference type="Gene3D" id="3.90.226.10">
    <property type="entry name" value="2-enoyl-CoA Hydratase, Chain A, domain 1"/>
    <property type="match status" value="1"/>
</dbReference>
<dbReference type="HAMAP" id="MF_00444">
    <property type="entry name" value="ClpP"/>
    <property type="match status" value="1"/>
</dbReference>
<dbReference type="InterPro" id="IPR001907">
    <property type="entry name" value="ClpP"/>
</dbReference>
<dbReference type="InterPro" id="IPR029045">
    <property type="entry name" value="ClpP/crotonase-like_dom_sf"/>
</dbReference>
<dbReference type="InterPro" id="IPR023562">
    <property type="entry name" value="ClpP/TepA"/>
</dbReference>
<dbReference type="InterPro" id="IPR033135">
    <property type="entry name" value="ClpP_His_AS"/>
</dbReference>
<dbReference type="InterPro" id="IPR018215">
    <property type="entry name" value="ClpP_Ser_AS"/>
</dbReference>
<dbReference type="NCBIfam" id="TIGR00493">
    <property type="entry name" value="clpP"/>
    <property type="match status" value="1"/>
</dbReference>
<dbReference type="NCBIfam" id="NF001368">
    <property type="entry name" value="PRK00277.1"/>
    <property type="match status" value="1"/>
</dbReference>
<dbReference type="NCBIfam" id="NF009205">
    <property type="entry name" value="PRK12553.1"/>
    <property type="match status" value="1"/>
</dbReference>
<dbReference type="PANTHER" id="PTHR10381">
    <property type="entry name" value="ATP-DEPENDENT CLP PROTEASE PROTEOLYTIC SUBUNIT"/>
    <property type="match status" value="1"/>
</dbReference>
<dbReference type="PANTHER" id="PTHR10381:SF70">
    <property type="entry name" value="ATP-DEPENDENT CLP PROTEASE PROTEOLYTIC SUBUNIT"/>
    <property type="match status" value="1"/>
</dbReference>
<dbReference type="Pfam" id="PF00574">
    <property type="entry name" value="CLP_protease"/>
    <property type="match status" value="1"/>
</dbReference>
<dbReference type="PRINTS" id="PR00127">
    <property type="entry name" value="CLPPROTEASEP"/>
</dbReference>
<dbReference type="SUPFAM" id="SSF52096">
    <property type="entry name" value="ClpP/crotonase"/>
    <property type="match status" value="1"/>
</dbReference>
<dbReference type="PROSITE" id="PS00382">
    <property type="entry name" value="CLP_PROTEASE_HIS"/>
    <property type="match status" value="1"/>
</dbReference>
<dbReference type="PROSITE" id="PS00381">
    <property type="entry name" value="CLP_PROTEASE_SER"/>
    <property type="match status" value="1"/>
</dbReference>
<feature type="chain" id="PRO_1000080901" description="ATP-dependent Clp protease proteolytic subunit">
    <location>
        <begin position="1"/>
        <end position="203"/>
    </location>
</feature>
<feature type="active site" description="Nucleophile" evidence="1">
    <location>
        <position position="107"/>
    </location>
</feature>
<feature type="active site" evidence="1">
    <location>
        <position position="132"/>
    </location>
</feature>
<protein>
    <recommendedName>
        <fullName evidence="1">ATP-dependent Clp protease proteolytic subunit</fullName>
        <ecNumber evidence="1">3.4.21.92</ecNumber>
    </recommendedName>
    <alternativeName>
        <fullName evidence="1">Endopeptidase Clp</fullName>
    </alternativeName>
</protein>
<proteinExistence type="inferred from homology"/>
<gene>
    <name evidence="1" type="primary">clpP</name>
    <name type="ordered locus">Ssed_1541</name>
</gene>
<sequence length="203" mass="22111">MQNAPESVLNALVPMVVEQTAKGERSYDIYSRLLKERVIFLVGQVEEHMANLIVAQLLFLESESPDKDIYLYINSPGGSVTAGMAIYDTMQFIKPNVSTVCIGQAASMGAFLLAGGAEGKRHCLPNSRVMIHQPLGGFQGQASDIAIHAQEILGIKNKLNQMLADHTGQPMEIIERDTDRDNFMSAAEAAEYGLVDSVLSKRG</sequence>
<accession>A8FTH9</accession>
<evidence type="ECO:0000255" key="1">
    <source>
        <dbReference type="HAMAP-Rule" id="MF_00444"/>
    </source>
</evidence>
<reference key="1">
    <citation type="submission" date="2007-08" db="EMBL/GenBank/DDBJ databases">
        <title>Complete sequence of Shewanella sediminis HAW-EB3.</title>
        <authorList>
            <consortium name="US DOE Joint Genome Institute"/>
            <person name="Copeland A."/>
            <person name="Lucas S."/>
            <person name="Lapidus A."/>
            <person name="Barry K."/>
            <person name="Glavina del Rio T."/>
            <person name="Dalin E."/>
            <person name="Tice H."/>
            <person name="Pitluck S."/>
            <person name="Chertkov O."/>
            <person name="Brettin T."/>
            <person name="Bruce D."/>
            <person name="Detter J.C."/>
            <person name="Han C."/>
            <person name="Schmutz J."/>
            <person name="Larimer F."/>
            <person name="Land M."/>
            <person name="Hauser L."/>
            <person name="Kyrpides N."/>
            <person name="Kim E."/>
            <person name="Zhao J.-S."/>
            <person name="Richardson P."/>
        </authorList>
    </citation>
    <scope>NUCLEOTIDE SEQUENCE [LARGE SCALE GENOMIC DNA]</scope>
    <source>
        <strain>HAW-EB3</strain>
    </source>
</reference>